<organism>
    <name type="scientific">Escherichia coli O45:K1 (strain S88 / ExPEC)</name>
    <dbReference type="NCBI Taxonomy" id="585035"/>
    <lineage>
        <taxon>Bacteria</taxon>
        <taxon>Pseudomonadati</taxon>
        <taxon>Pseudomonadota</taxon>
        <taxon>Gammaproteobacteria</taxon>
        <taxon>Enterobacterales</taxon>
        <taxon>Enterobacteriaceae</taxon>
        <taxon>Escherichia</taxon>
    </lineage>
</organism>
<reference key="1">
    <citation type="journal article" date="2009" name="PLoS Genet.">
        <title>Organised genome dynamics in the Escherichia coli species results in highly diverse adaptive paths.</title>
        <authorList>
            <person name="Touchon M."/>
            <person name="Hoede C."/>
            <person name="Tenaillon O."/>
            <person name="Barbe V."/>
            <person name="Baeriswyl S."/>
            <person name="Bidet P."/>
            <person name="Bingen E."/>
            <person name="Bonacorsi S."/>
            <person name="Bouchier C."/>
            <person name="Bouvet O."/>
            <person name="Calteau A."/>
            <person name="Chiapello H."/>
            <person name="Clermont O."/>
            <person name="Cruveiller S."/>
            <person name="Danchin A."/>
            <person name="Diard M."/>
            <person name="Dossat C."/>
            <person name="Karoui M.E."/>
            <person name="Frapy E."/>
            <person name="Garry L."/>
            <person name="Ghigo J.M."/>
            <person name="Gilles A.M."/>
            <person name="Johnson J."/>
            <person name="Le Bouguenec C."/>
            <person name="Lescat M."/>
            <person name="Mangenot S."/>
            <person name="Martinez-Jehanne V."/>
            <person name="Matic I."/>
            <person name="Nassif X."/>
            <person name="Oztas S."/>
            <person name="Petit M.A."/>
            <person name="Pichon C."/>
            <person name="Rouy Z."/>
            <person name="Ruf C.S."/>
            <person name="Schneider D."/>
            <person name="Tourret J."/>
            <person name="Vacherie B."/>
            <person name="Vallenet D."/>
            <person name="Medigue C."/>
            <person name="Rocha E.P.C."/>
            <person name="Denamur E."/>
        </authorList>
    </citation>
    <scope>NUCLEOTIDE SEQUENCE [LARGE SCALE GENOMIC DNA]</scope>
    <source>
        <strain>S88 / ExPEC</strain>
    </source>
</reference>
<evidence type="ECO:0000255" key="1">
    <source>
        <dbReference type="HAMAP-Rule" id="MF_01813"/>
    </source>
</evidence>
<dbReference type="EC" id="2.1.1.163" evidence="1"/>
<dbReference type="EC" id="2.1.1.201" evidence="1"/>
<dbReference type="EMBL" id="CU928161">
    <property type="protein sequence ID" value="CAR05474.1"/>
    <property type="molecule type" value="Genomic_DNA"/>
</dbReference>
<dbReference type="RefSeq" id="WP_000227959.1">
    <property type="nucleotide sequence ID" value="NC_011742.1"/>
</dbReference>
<dbReference type="SMR" id="B7MHC0"/>
<dbReference type="KEGG" id="ecz:ECS88_4283"/>
<dbReference type="HOGENOM" id="CLU_037990_0_0_6"/>
<dbReference type="UniPathway" id="UPA00079">
    <property type="reaction ID" value="UER00169"/>
</dbReference>
<dbReference type="UniPathway" id="UPA00232"/>
<dbReference type="Proteomes" id="UP000000747">
    <property type="component" value="Chromosome"/>
</dbReference>
<dbReference type="GO" id="GO:0008425">
    <property type="term" value="F:2-methoxy-6-polyprenyl-1,4-benzoquinol methyltransferase activity"/>
    <property type="evidence" value="ECO:0007669"/>
    <property type="project" value="UniProtKB-UniRule"/>
</dbReference>
<dbReference type="GO" id="GO:0043770">
    <property type="term" value="F:demethylmenaquinone methyltransferase activity"/>
    <property type="evidence" value="ECO:0007669"/>
    <property type="project" value="UniProtKB-UniRule"/>
</dbReference>
<dbReference type="GO" id="GO:0009060">
    <property type="term" value="P:aerobic respiration"/>
    <property type="evidence" value="ECO:0007669"/>
    <property type="project" value="UniProtKB-UniRule"/>
</dbReference>
<dbReference type="GO" id="GO:0009234">
    <property type="term" value="P:menaquinone biosynthetic process"/>
    <property type="evidence" value="ECO:0007669"/>
    <property type="project" value="UniProtKB-UniRule"/>
</dbReference>
<dbReference type="GO" id="GO:0032259">
    <property type="term" value="P:methylation"/>
    <property type="evidence" value="ECO:0007669"/>
    <property type="project" value="UniProtKB-KW"/>
</dbReference>
<dbReference type="CDD" id="cd02440">
    <property type="entry name" value="AdoMet_MTases"/>
    <property type="match status" value="1"/>
</dbReference>
<dbReference type="FunFam" id="3.40.50.150:FF:000014">
    <property type="entry name" value="Ubiquinone/menaquinone biosynthesis C-methyltransferase UbiE"/>
    <property type="match status" value="1"/>
</dbReference>
<dbReference type="Gene3D" id="3.40.50.150">
    <property type="entry name" value="Vaccinia Virus protein VP39"/>
    <property type="match status" value="1"/>
</dbReference>
<dbReference type="HAMAP" id="MF_01813">
    <property type="entry name" value="MenG_UbiE_methyltr"/>
    <property type="match status" value="1"/>
</dbReference>
<dbReference type="InterPro" id="IPR029063">
    <property type="entry name" value="SAM-dependent_MTases_sf"/>
</dbReference>
<dbReference type="InterPro" id="IPR004033">
    <property type="entry name" value="UbiE/COQ5_MeTrFase"/>
</dbReference>
<dbReference type="InterPro" id="IPR023576">
    <property type="entry name" value="UbiE/COQ5_MeTrFase_CS"/>
</dbReference>
<dbReference type="NCBIfam" id="TIGR01934">
    <property type="entry name" value="MenG_MenH_UbiE"/>
    <property type="match status" value="1"/>
</dbReference>
<dbReference type="NCBIfam" id="NF001240">
    <property type="entry name" value="PRK00216.1-1"/>
    <property type="match status" value="1"/>
</dbReference>
<dbReference type="NCBIfam" id="NF001242">
    <property type="entry name" value="PRK00216.1-3"/>
    <property type="match status" value="1"/>
</dbReference>
<dbReference type="NCBIfam" id="NF001244">
    <property type="entry name" value="PRK00216.1-5"/>
    <property type="match status" value="1"/>
</dbReference>
<dbReference type="PANTHER" id="PTHR43591:SF24">
    <property type="entry name" value="2-METHOXY-6-POLYPRENYL-1,4-BENZOQUINOL METHYLASE, MITOCHONDRIAL"/>
    <property type="match status" value="1"/>
</dbReference>
<dbReference type="PANTHER" id="PTHR43591">
    <property type="entry name" value="METHYLTRANSFERASE"/>
    <property type="match status" value="1"/>
</dbReference>
<dbReference type="Pfam" id="PF01209">
    <property type="entry name" value="Ubie_methyltran"/>
    <property type="match status" value="1"/>
</dbReference>
<dbReference type="SUPFAM" id="SSF53335">
    <property type="entry name" value="S-adenosyl-L-methionine-dependent methyltransferases"/>
    <property type="match status" value="1"/>
</dbReference>
<dbReference type="PROSITE" id="PS51608">
    <property type="entry name" value="SAM_MT_UBIE"/>
    <property type="match status" value="1"/>
</dbReference>
<dbReference type="PROSITE" id="PS01183">
    <property type="entry name" value="UBIE_1"/>
    <property type="match status" value="1"/>
</dbReference>
<dbReference type="PROSITE" id="PS01184">
    <property type="entry name" value="UBIE_2"/>
    <property type="match status" value="1"/>
</dbReference>
<proteinExistence type="inferred from homology"/>
<feature type="chain" id="PRO_1000187755" description="Ubiquinone/menaquinone biosynthesis C-methyltransferase UbiE">
    <location>
        <begin position="1"/>
        <end position="251"/>
    </location>
</feature>
<feature type="binding site" evidence="1">
    <location>
        <position position="74"/>
    </location>
    <ligand>
        <name>S-adenosyl-L-methionine</name>
        <dbReference type="ChEBI" id="CHEBI:59789"/>
    </ligand>
</feature>
<feature type="binding site" evidence="1">
    <location>
        <position position="95"/>
    </location>
    <ligand>
        <name>S-adenosyl-L-methionine</name>
        <dbReference type="ChEBI" id="CHEBI:59789"/>
    </ligand>
</feature>
<feature type="binding site" evidence="1">
    <location>
        <begin position="123"/>
        <end position="124"/>
    </location>
    <ligand>
        <name>S-adenosyl-L-methionine</name>
        <dbReference type="ChEBI" id="CHEBI:59789"/>
    </ligand>
</feature>
<feature type="binding site" evidence="1">
    <location>
        <position position="140"/>
    </location>
    <ligand>
        <name>S-adenosyl-L-methionine</name>
        <dbReference type="ChEBI" id="CHEBI:59789"/>
    </ligand>
</feature>
<gene>
    <name evidence="1" type="primary">ubiE</name>
    <name type="ordered locus">ECS88_4283</name>
</gene>
<accession>B7MHC0</accession>
<protein>
    <recommendedName>
        <fullName evidence="1">Ubiquinone/menaquinone biosynthesis C-methyltransferase UbiE</fullName>
        <ecNumber evidence="1">2.1.1.163</ecNumber>
        <ecNumber evidence="1">2.1.1.201</ecNumber>
    </recommendedName>
    <alternativeName>
        <fullName evidence="1">2-methoxy-6-polyprenyl-1,4-benzoquinol methylase</fullName>
    </alternativeName>
    <alternativeName>
        <fullName evidence="1">Demethylmenaquinone methyltransferase</fullName>
    </alternativeName>
</protein>
<keyword id="KW-0474">Menaquinone biosynthesis</keyword>
<keyword id="KW-0489">Methyltransferase</keyword>
<keyword id="KW-1185">Reference proteome</keyword>
<keyword id="KW-0949">S-adenosyl-L-methionine</keyword>
<keyword id="KW-0808">Transferase</keyword>
<keyword id="KW-0831">Ubiquinone biosynthesis</keyword>
<comment type="function">
    <text evidence="1">Methyltransferase required for the conversion of demethylmenaquinol (DMKH2) to menaquinol (MKH2) and the conversion of 2-polyprenyl-6-methoxy-1,4-benzoquinol (DDMQH2) to 2-polyprenyl-3-methyl-6-methoxy-1,4-benzoquinol (DMQH2).</text>
</comment>
<comment type="catalytic activity">
    <reaction evidence="1">
        <text>a 2-demethylmenaquinol + S-adenosyl-L-methionine = a menaquinol + S-adenosyl-L-homocysteine + H(+)</text>
        <dbReference type="Rhea" id="RHEA:42640"/>
        <dbReference type="Rhea" id="RHEA-COMP:9539"/>
        <dbReference type="Rhea" id="RHEA-COMP:9563"/>
        <dbReference type="ChEBI" id="CHEBI:15378"/>
        <dbReference type="ChEBI" id="CHEBI:18151"/>
        <dbReference type="ChEBI" id="CHEBI:55437"/>
        <dbReference type="ChEBI" id="CHEBI:57856"/>
        <dbReference type="ChEBI" id="CHEBI:59789"/>
        <dbReference type="EC" id="2.1.1.163"/>
    </reaction>
</comment>
<comment type="catalytic activity">
    <reaction evidence="1">
        <text>a 2-methoxy-6-(all-trans-polyprenyl)benzene-1,4-diol + S-adenosyl-L-methionine = a 5-methoxy-2-methyl-3-(all-trans-polyprenyl)benzene-1,4-diol + S-adenosyl-L-homocysteine + H(+)</text>
        <dbReference type="Rhea" id="RHEA:28286"/>
        <dbReference type="Rhea" id="RHEA-COMP:10858"/>
        <dbReference type="Rhea" id="RHEA-COMP:10859"/>
        <dbReference type="ChEBI" id="CHEBI:15378"/>
        <dbReference type="ChEBI" id="CHEBI:57856"/>
        <dbReference type="ChEBI" id="CHEBI:59789"/>
        <dbReference type="ChEBI" id="CHEBI:84166"/>
        <dbReference type="ChEBI" id="CHEBI:84167"/>
        <dbReference type="EC" id="2.1.1.201"/>
    </reaction>
</comment>
<comment type="pathway">
    <text evidence="1">Quinol/quinone metabolism; menaquinone biosynthesis; menaquinol from 1,4-dihydroxy-2-naphthoate: step 2/2.</text>
</comment>
<comment type="pathway">
    <text evidence="1">Cofactor biosynthesis; ubiquinone biosynthesis.</text>
</comment>
<comment type="similarity">
    <text evidence="1">Belongs to the class I-like SAM-binding methyltransferase superfamily. MenG/UbiE family.</text>
</comment>
<name>UBIE_ECO45</name>
<sequence length="251" mass="28103">MVDKSQETTHFGFQTVAKEQKADMVAHVFHSVASKYDVMNDLMSFGIHRLWKRFTIDCSGVRRGQTVLDLAGGTGDLTAKFSRLVGETGKVVLADINESMLKMGREKLRNIGVIGNVEYVQANAEALPFPDNTFDCITISFGLRNVTDKDKALRSMYRVLKPGGRLLVLEFSKPIIEPLSKAYDAYSFHVLPRIGSLVANDADSYRYLAESIRMHPDQDTLKTMMQDAGFESVDYYNLTAGVVALHRGYKF</sequence>